<evidence type="ECO:0000255" key="1">
    <source>
        <dbReference type="HAMAP-Rule" id="MF_00189"/>
    </source>
</evidence>
<sequence>MKQLLDFLPLVIFFAVYKMYDIYIASGALIAATALQLIVTYALYKKIEKMHLITFVMVTFFGTLTLIFHDDAFIKWKVTVVYALFAIALAVSQLLNKPILKSMLGKELVVADKIWAHVTWYWVSFFVACGLVNIYVAFSLSQETWVNFKVFGLTALTLINTVITVVYLFKNMPEEHKKELNK</sequence>
<protein>
    <recommendedName>
        <fullName evidence="1">Inner membrane-spanning protein YciB</fullName>
    </recommendedName>
</protein>
<organism>
    <name type="scientific">Shewanella woodyi (strain ATCC 51908 / MS32)</name>
    <dbReference type="NCBI Taxonomy" id="392500"/>
    <lineage>
        <taxon>Bacteria</taxon>
        <taxon>Pseudomonadati</taxon>
        <taxon>Pseudomonadota</taxon>
        <taxon>Gammaproteobacteria</taxon>
        <taxon>Alteromonadales</taxon>
        <taxon>Shewanellaceae</taxon>
        <taxon>Shewanella</taxon>
    </lineage>
</organism>
<keyword id="KW-0997">Cell inner membrane</keyword>
<keyword id="KW-1003">Cell membrane</keyword>
<keyword id="KW-0472">Membrane</keyword>
<keyword id="KW-1185">Reference proteome</keyword>
<keyword id="KW-0812">Transmembrane</keyword>
<keyword id="KW-1133">Transmembrane helix</keyword>
<dbReference type="EMBL" id="CP000961">
    <property type="protein sequence ID" value="ACA87198.1"/>
    <property type="molecule type" value="Genomic_DNA"/>
</dbReference>
<dbReference type="RefSeq" id="WP_012325534.1">
    <property type="nucleotide sequence ID" value="NC_010506.1"/>
</dbReference>
<dbReference type="STRING" id="392500.Swoo_2925"/>
<dbReference type="KEGG" id="swd:Swoo_2925"/>
<dbReference type="eggNOG" id="COG2917">
    <property type="taxonomic scope" value="Bacteria"/>
</dbReference>
<dbReference type="HOGENOM" id="CLU_089554_2_0_6"/>
<dbReference type="Proteomes" id="UP000002168">
    <property type="component" value="Chromosome"/>
</dbReference>
<dbReference type="GO" id="GO:0005886">
    <property type="term" value="C:plasma membrane"/>
    <property type="evidence" value="ECO:0007669"/>
    <property type="project" value="UniProtKB-SubCell"/>
</dbReference>
<dbReference type="HAMAP" id="MF_00189">
    <property type="entry name" value="YciB"/>
    <property type="match status" value="1"/>
</dbReference>
<dbReference type="InterPro" id="IPR006008">
    <property type="entry name" value="YciB"/>
</dbReference>
<dbReference type="NCBIfam" id="TIGR00997">
    <property type="entry name" value="ispZ"/>
    <property type="match status" value="1"/>
</dbReference>
<dbReference type="NCBIfam" id="NF001324">
    <property type="entry name" value="PRK00259.1-2"/>
    <property type="match status" value="1"/>
</dbReference>
<dbReference type="PANTHER" id="PTHR36917:SF1">
    <property type="entry name" value="INNER MEMBRANE-SPANNING PROTEIN YCIB"/>
    <property type="match status" value="1"/>
</dbReference>
<dbReference type="PANTHER" id="PTHR36917">
    <property type="entry name" value="INTRACELLULAR SEPTATION PROTEIN A-RELATED"/>
    <property type="match status" value="1"/>
</dbReference>
<dbReference type="Pfam" id="PF04279">
    <property type="entry name" value="IspA"/>
    <property type="match status" value="1"/>
</dbReference>
<accession>B1KK11</accession>
<proteinExistence type="inferred from homology"/>
<reference key="1">
    <citation type="submission" date="2008-02" db="EMBL/GenBank/DDBJ databases">
        <title>Complete sequence of Shewanella woodyi ATCC 51908.</title>
        <authorList>
            <consortium name="US DOE Joint Genome Institute"/>
            <person name="Copeland A."/>
            <person name="Lucas S."/>
            <person name="Lapidus A."/>
            <person name="Glavina del Rio T."/>
            <person name="Dalin E."/>
            <person name="Tice H."/>
            <person name="Bruce D."/>
            <person name="Goodwin L."/>
            <person name="Pitluck S."/>
            <person name="Sims D."/>
            <person name="Brettin T."/>
            <person name="Detter J.C."/>
            <person name="Han C."/>
            <person name="Kuske C.R."/>
            <person name="Schmutz J."/>
            <person name="Larimer F."/>
            <person name="Land M."/>
            <person name="Hauser L."/>
            <person name="Kyrpides N."/>
            <person name="Lykidis A."/>
            <person name="Zhao J.-S."/>
            <person name="Richardson P."/>
        </authorList>
    </citation>
    <scope>NUCLEOTIDE SEQUENCE [LARGE SCALE GENOMIC DNA]</scope>
    <source>
        <strain>ATCC 51908 / MS32</strain>
    </source>
</reference>
<gene>
    <name evidence="1" type="primary">yciB</name>
    <name type="ordered locus">Swoo_2925</name>
</gene>
<feature type="chain" id="PRO_1000098898" description="Inner membrane-spanning protein YciB">
    <location>
        <begin position="1"/>
        <end position="182"/>
    </location>
</feature>
<feature type="transmembrane region" description="Helical" evidence="1">
    <location>
        <begin position="22"/>
        <end position="42"/>
    </location>
</feature>
<feature type="transmembrane region" description="Helical" evidence="1">
    <location>
        <begin position="50"/>
        <end position="70"/>
    </location>
</feature>
<feature type="transmembrane region" description="Helical" evidence="1">
    <location>
        <begin position="72"/>
        <end position="92"/>
    </location>
</feature>
<feature type="transmembrane region" description="Helical" evidence="1">
    <location>
        <begin position="118"/>
        <end position="138"/>
    </location>
</feature>
<feature type="transmembrane region" description="Helical" evidence="1">
    <location>
        <begin position="148"/>
        <end position="168"/>
    </location>
</feature>
<name>YCIB_SHEWM</name>
<comment type="function">
    <text evidence="1">Plays a role in cell envelope biogenesis, maintenance of cell envelope integrity and membrane homeostasis.</text>
</comment>
<comment type="subcellular location">
    <subcellularLocation>
        <location evidence="1">Cell inner membrane</location>
        <topology evidence="1">Multi-pass membrane protein</topology>
    </subcellularLocation>
</comment>
<comment type="similarity">
    <text evidence="1">Belongs to the YciB family.</text>
</comment>